<sequence>MTTPDAEDASPSPEYRSDQDDDMAAEQTTDRQSGDASPTQKPANGKPNAKDPLRPRRKKARRACFACQRAHLTCGDERPCGRCIKRGLQDHCMDGVRKKAKYLHDAPDGSLMPGVGGHYPYMNGNRPTPLPAQDTHTVSVSPQSNMYNQAQPPAAFYPPNSIPGQLPVTQDTRAFSNQQSPISPPFTQAHHASVQNAGAPSTMSQGQQGMQQFGPLFDPSDPALFNFDISSLNFGNHYGALEFGMLGHMSSGAVETPHDNNLMNNMSGSVNMYNQQVPSGYPDQNNAAAMAFGPNGLPGSEWQETQSRQGSMHVHTPNNTSGSGSHDHHPHRNDSLNGPHAFAIGQGPATHSTASPASTDASTYEGDNPLSTAAFFANANRPHAQRSPLVSRPQQENRPPTTALQSIHANGIRKRQRDTKSVYQGITKPYDYVKGYHRLYQLIDKKYSRPWVAKAQQYLQNYRPVLLQVREELNRDDLIHQEMGLQRHLMTLQEHFAEVGTPFLICRRSGEIVGINKEFTILTGWKRDVLLGHEPNLNVNLGTNRESSESDTSTQNTTPNLSAQDSEGATPSVNIIELMDARSALEFLQHFSELCYQDPRGYASQRVNMLRYQTKADVDRIHNMKNASSGDAKLDPLVKMEGGAVHQGESAMQRLGAKSGMVDCMIWWHIKRDIFDMPVLVCMSVMPVLDKGLP</sequence>
<proteinExistence type="inferred from homology"/>
<accession>B2W978</accession>
<feature type="chain" id="PRO_0000406450" description="Transcription activator of gluconeogenesis PTRG_06536">
    <location>
        <begin position="1"/>
        <end position="694"/>
    </location>
</feature>
<feature type="domain" description="PAS">
    <location>
        <begin position="485"/>
        <end position="559"/>
    </location>
</feature>
<feature type="DNA-binding region" description="Zn(2)-C6 fungal-type" evidence="2">
    <location>
        <begin position="64"/>
        <end position="92"/>
    </location>
</feature>
<feature type="region of interest" description="Disordered" evidence="3">
    <location>
        <begin position="1"/>
        <end position="57"/>
    </location>
</feature>
<feature type="region of interest" description="Disordered" evidence="3">
    <location>
        <begin position="175"/>
        <end position="216"/>
    </location>
</feature>
<feature type="region of interest" description="Disordered" evidence="3">
    <location>
        <begin position="289"/>
        <end position="369"/>
    </location>
</feature>
<feature type="region of interest" description="Disordered" evidence="3">
    <location>
        <begin position="384"/>
        <end position="420"/>
    </location>
</feature>
<feature type="region of interest" description="Disordered" evidence="3">
    <location>
        <begin position="539"/>
        <end position="569"/>
    </location>
</feature>
<feature type="compositionally biased region" description="Polar residues" evidence="3">
    <location>
        <begin position="193"/>
        <end position="204"/>
    </location>
</feature>
<feature type="compositionally biased region" description="Low complexity" evidence="3">
    <location>
        <begin position="205"/>
        <end position="214"/>
    </location>
</feature>
<feature type="compositionally biased region" description="Polar residues" evidence="3">
    <location>
        <begin position="302"/>
        <end position="324"/>
    </location>
</feature>
<feature type="compositionally biased region" description="Low complexity" evidence="3">
    <location>
        <begin position="349"/>
        <end position="363"/>
    </location>
</feature>
<feature type="compositionally biased region" description="Polar residues" evidence="3">
    <location>
        <begin position="392"/>
        <end position="408"/>
    </location>
</feature>
<keyword id="KW-0010">Activator</keyword>
<keyword id="KW-0238">DNA-binding</keyword>
<keyword id="KW-0312">Gluconeogenesis</keyword>
<keyword id="KW-0479">Metal-binding</keyword>
<keyword id="KW-0539">Nucleus</keyword>
<keyword id="KW-1185">Reference proteome</keyword>
<keyword id="KW-0804">Transcription</keyword>
<keyword id="KW-0805">Transcription regulation</keyword>
<keyword id="KW-0862">Zinc</keyword>
<comment type="function">
    <text evidence="1">Transcription factor which regulates nonfermentable carbon utilization. Activator of gluconeogenetic genes (By similarity).</text>
</comment>
<comment type="subcellular location">
    <subcellularLocation>
        <location evidence="2">Nucleus</location>
    </subcellularLocation>
</comment>
<comment type="similarity">
    <text evidence="4">Belongs to the ERT1/acuK family.</text>
</comment>
<protein>
    <recommendedName>
        <fullName>Transcription activator of gluconeogenesis PTRG_06536</fullName>
    </recommendedName>
</protein>
<gene>
    <name type="ORF">PTRG_06536</name>
</gene>
<dbReference type="EMBL" id="DS231620">
    <property type="protein sequence ID" value="EDU49456.1"/>
    <property type="molecule type" value="Genomic_DNA"/>
</dbReference>
<dbReference type="RefSeq" id="XP_001936869.1">
    <property type="nucleotide sequence ID" value="XM_001936834.1"/>
</dbReference>
<dbReference type="FunCoup" id="B2W978">
    <property type="interactions" value="210"/>
</dbReference>
<dbReference type="STRING" id="426418.B2W978"/>
<dbReference type="EnsemblFungi" id="EDU49456">
    <property type="protein sequence ID" value="EDU49456"/>
    <property type="gene ID" value="PTRG_06536"/>
</dbReference>
<dbReference type="GeneID" id="6344795"/>
<dbReference type="KEGG" id="ptrr:6344795"/>
<dbReference type="eggNOG" id="ENOG502R1M5">
    <property type="taxonomic scope" value="Eukaryota"/>
</dbReference>
<dbReference type="HOGENOM" id="CLU_010748_1_0_1"/>
<dbReference type="InParanoid" id="B2W978"/>
<dbReference type="OMA" id="VMTTCKL"/>
<dbReference type="OrthoDB" id="16478at28556"/>
<dbReference type="Proteomes" id="UP000001471">
    <property type="component" value="Unassembled WGS sequence"/>
</dbReference>
<dbReference type="GO" id="GO:0005634">
    <property type="term" value="C:nucleus"/>
    <property type="evidence" value="ECO:0007669"/>
    <property type="project" value="UniProtKB-SubCell"/>
</dbReference>
<dbReference type="GO" id="GO:0000981">
    <property type="term" value="F:DNA-binding transcription factor activity, RNA polymerase II-specific"/>
    <property type="evidence" value="ECO:0007669"/>
    <property type="project" value="InterPro"/>
</dbReference>
<dbReference type="GO" id="GO:0000977">
    <property type="term" value="F:RNA polymerase II transcription regulatory region sequence-specific DNA binding"/>
    <property type="evidence" value="ECO:0007669"/>
    <property type="project" value="TreeGrafter"/>
</dbReference>
<dbReference type="GO" id="GO:0008270">
    <property type="term" value="F:zinc ion binding"/>
    <property type="evidence" value="ECO:0007669"/>
    <property type="project" value="InterPro"/>
</dbReference>
<dbReference type="GO" id="GO:0009267">
    <property type="term" value="P:cellular response to starvation"/>
    <property type="evidence" value="ECO:0007669"/>
    <property type="project" value="TreeGrafter"/>
</dbReference>
<dbReference type="GO" id="GO:0006094">
    <property type="term" value="P:gluconeogenesis"/>
    <property type="evidence" value="ECO:0007669"/>
    <property type="project" value="UniProtKB-KW"/>
</dbReference>
<dbReference type="CDD" id="cd00067">
    <property type="entry name" value="GAL4"/>
    <property type="match status" value="1"/>
</dbReference>
<dbReference type="Gene3D" id="4.10.240.10">
    <property type="entry name" value="Zn(2)-C6 fungal-type DNA-binding domain"/>
    <property type="match status" value="1"/>
</dbReference>
<dbReference type="InterPro" id="IPR050335">
    <property type="entry name" value="ERT1_acuK_gluconeogen_tf"/>
</dbReference>
<dbReference type="InterPro" id="IPR056751">
    <property type="entry name" value="PAS_13"/>
</dbReference>
<dbReference type="InterPro" id="IPR036864">
    <property type="entry name" value="Zn2-C6_fun-type_DNA-bd_sf"/>
</dbReference>
<dbReference type="InterPro" id="IPR001138">
    <property type="entry name" value="Zn2Cys6_DnaBD"/>
</dbReference>
<dbReference type="PANTHER" id="PTHR47659:SF1">
    <property type="entry name" value="TRANSCRIPTION ACTIVATOR OF GLUCONEOGENESIS ERT1"/>
    <property type="match status" value="1"/>
</dbReference>
<dbReference type="PANTHER" id="PTHR47659">
    <property type="entry name" value="ZN(II)2CYS6 TRANSCRIPTION FACTOR (EUROFUNG)-RELATED"/>
    <property type="match status" value="1"/>
</dbReference>
<dbReference type="Pfam" id="PF24990">
    <property type="entry name" value="PAS_13"/>
    <property type="match status" value="1"/>
</dbReference>
<dbReference type="SMART" id="SM00066">
    <property type="entry name" value="GAL4"/>
    <property type="match status" value="1"/>
</dbReference>
<dbReference type="SUPFAM" id="SSF57701">
    <property type="entry name" value="Zn2/Cys6 DNA-binding domain"/>
    <property type="match status" value="1"/>
</dbReference>
<dbReference type="PROSITE" id="PS50048">
    <property type="entry name" value="ZN2_CY6_FUNGAL_2"/>
    <property type="match status" value="1"/>
</dbReference>
<reference key="1">
    <citation type="journal article" date="2013" name="G3 (Bethesda)">
        <title>Comparative genomics of a plant-pathogenic fungus, Pyrenophora tritici-repentis, reveals transduplication and the impact of repeat elements on pathogenicity and population divergence.</title>
        <authorList>
            <person name="Manning V.A."/>
            <person name="Pandelova I."/>
            <person name="Dhillon B."/>
            <person name="Wilhelm L.J."/>
            <person name="Goodwin S.B."/>
            <person name="Berlin A.M."/>
            <person name="Figueroa M."/>
            <person name="Freitag M."/>
            <person name="Hane J.K."/>
            <person name="Henrissat B."/>
            <person name="Holman W.H."/>
            <person name="Kodira C.D."/>
            <person name="Martin J."/>
            <person name="Oliver R.P."/>
            <person name="Robbertse B."/>
            <person name="Schackwitz W."/>
            <person name="Schwartz D.C."/>
            <person name="Spatafora J.W."/>
            <person name="Turgeon B.G."/>
            <person name="Yandava C."/>
            <person name="Young S."/>
            <person name="Zhou S."/>
            <person name="Zeng Q."/>
            <person name="Grigoriev I.V."/>
            <person name="Ma L.-J."/>
            <person name="Ciuffetti L.M."/>
        </authorList>
    </citation>
    <scope>NUCLEOTIDE SEQUENCE [LARGE SCALE GENOMIC DNA]</scope>
    <source>
        <strain>Pt-1C-BFP</strain>
    </source>
</reference>
<organism>
    <name type="scientific">Pyrenophora tritici-repentis (strain Pt-1C-BFP)</name>
    <name type="common">Wheat tan spot fungus</name>
    <name type="synonym">Drechslera tritici-repentis</name>
    <dbReference type="NCBI Taxonomy" id="426418"/>
    <lineage>
        <taxon>Eukaryota</taxon>
        <taxon>Fungi</taxon>
        <taxon>Dikarya</taxon>
        <taxon>Ascomycota</taxon>
        <taxon>Pezizomycotina</taxon>
        <taxon>Dothideomycetes</taxon>
        <taxon>Pleosporomycetidae</taxon>
        <taxon>Pleosporales</taxon>
        <taxon>Pleosporineae</taxon>
        <taxon>Pleosporaceae</taxon>
        <taxon>Pyrenophora</taxon>
    </lineage>
</organism>
<evidence type="ECO:0000250" key="1"/>
<evidence type="ECO:0000255" key="2">
    <source>
        <dbReference type="PROSITE-ProRule" id="PRU00227"/>
    </source>
</evidence>
<evidence type="ECO:0000256" key="3">
    <source>
        <dbReference type="SAM" id="MobiDB-lite"/>
    </source>
</evidence>
<evidence type="ECO:0000305" key="4"/>
<name>ACUK_PYRTR</name>